<name>LR10B_HUMAN</name>
<sequence>MGIAESTPDELPSDAEEQLRSGDQQLELSGRRLRRLPSAVCALSRLQKLYVSGTGLRELPEEIEELRELRILALDFNKLERLPDGLCRLPRLTRLYLGGNRLLALPADFAQLQSLRCLWIEGNFLRRFPRPLLRLVALQSLQMGDNRLRALPAELPRMTGLRGLWLYGNRFEEFPPALLRMGRLHILDLDRNRLGGFPDLHPLRALRVFSYDHNPVTGPPRVADTVFLVGEGAVERMAERDEPTPRPPPRRPARAFEDEEEEDLLIGGAGSRALGAPGGSFRALEAAPGLGT</sequence>
<organism>
    <name type="scientific">Homo sapiens</name>
    <name type="common">Human</name>
    <dbReference type="NCBI Taxonomy" id="9606"/>
    <lineage>
        <taxon>Eukaryota</taxon>
        <taxon>Metazoa</taxon>
        <taxon>Chordata</taxon>
        <taxon>Craniata</taxon>
        <taxon>Vertebrata</taxon>
        <taxon>Euteleostomi</taxon>
        <taxon>Mammalia</taxon>
        <taxon>Eutheria</taxon>
        <taxon>Euarchontoglires</taxon>
        <taxon>Primates</taxon>
        <taxon>Haplorrhini</taxon>
        <taxon>Catarrhini</taxon>
        <taxon>Hominidae</taxon>
        <taxon>Homo</taxon>
    </lineage>
</organism>
<keyword id="KW-0433">Leucine-rich repeat</keyword>
<keyword id="KW-1267">Proteomics identification</keyword>
<keyword id="KW-1185">Reference proteome</keyword>
<keyword id="KW-0677">Repeat</keyword>
<reference key="1">
    <citation type="journal article" date="2006" name="Nature">
        <title>Human chromosome 11 DNA sequence and analysis including novel gene identification.</title>
        <authorList>
            <person name="Taylor T.D."/>
            <person name="Noguchi H."/>
            <person name="Totoki Y."/>
            <person name="Toyoda A."/>
            <person name="Kuroki Y."/>
            <person name="Dewar K."/>
            <person name="Lloyd C."/>
            <person name="Itoh T."/>
            <person name="Takeda T."/>
            <person name="Kim D.-W."/>
            <person name="She X."/>
            <person name="Barlow K.F."/>
            <person name="Bloom T."/>
            <person name="Bruford E."/>
            <person name="Chang J.L."/>
            <person name="Cuomo C.A."/>
            <person name="Eichler E."/>
            <person name="FitzGerald M.G."/>
            <person name="Jaffe D.B."/>
            <person name="LaButti K."/>
            <person name="Nicol R."/>
            <person name="Park H.-S."/>
            <person name="Seaman C."/>
            <person name="Sougnez C."/>
            <person name="Yang X."/>
            <person name="Zimmer A.R."/>
            <person name="Zody M.C."/>
            <person name="Birren B.W."/>
            <person name="Nusbaum C."/>
            <person name="Fujiyama A."/>
            <person name="Hattori M."/>
            <person name="Rogers J."/>
            <person name="Lander E.S."/>
            <person name="Sakaki Y."/>
        </authorList>
    </citation>
    <scope>NUCLEOTIDE SEQUENCE [LARGE SCALE GENOMIC DNA]</scope>
</reference>
<feature type="chain" id="PRO_0000346162" description="Leucine-rich repeat-containing protein 10B">
    <location>
        <begin position="1"/>
        <end position="292"/>
    </location>
</feature>
<feature type="repeat" description="LRR 1">
    <location>
        <begin position="22"/>
        <end position="43"/>
    </location>
</feature>
<feature type="repeat" description="LRR 2">
    <location>
        <begin position="45"/>
        <end position="66"/>
    </location>
</feature>
<feature type="repeat" description="LRR 3">
    <location>
        <begin position="68"/>
        <end position="90"/>
    </location>
</feature>
<feature type="repeat" description="LRR 4">
    <location>
        <begin position="91"/>
        <end position="112"/>
    </location>
</feature>
<feature type="repeat" description="LRR 5">
    <location>
        <begin position="114"/>
        <end position="136"/>
    </location>
</feature>
<feature type="repeat" description="LRR 6">
    <location>
        <begin position="137"/>
        <end position="158"/>
    </location>
</feature>
<feature type="repeat" description="LRR 7">
    <location>
        <begin position="160"/>
        <end position="181"/>
    </location>
</feature>
<feature type="repeat" description="LRR 8">
    <location>
        <begin position="183"/>
        <end position="204"/>
    </location>
</feature>
<feature type="repeat" description="LRR 9">
    <location>
        <begin position="205"/>
        <end position="226"/>
    </location>
</feature>
<feature type="region of interest" description="Disordered" evidence="1">
    <location>
        <begin position="1"/>
        <end position="20"/>
    </location>
</feature>
<feature type="region of interest" description="Disordered" evidence="1">
    <location>
        <begin position="236"/>
        <end position="261"/>
    </location>
</feature>
<feature type="compositionally biased region" description="Acidic residues" evidence="1">
    <location>
        <begin position="7"/>
        <end position="16"/>
    </location>
</feature>
<proteinExistence type="evidence at protein level"/>
<dbReference type="EMBL" id="AP003108">
    <property type="status" value="NOT_ANNOTATED_CDS"/>
    <property type="molecule type" value="Genomic_DNA"/>
</dbReference>
<dbReference type="CCDS" id="CCDS44621.1"/>
<dbReference type="RefSeq" id="NP_001138549.1">
    <property type="nucleotide sequence ID" value="NM_001145077.2"/>
</dbReference>
<dbReference type="SMR" id="A6NIK2"/>
<dbReference type="BioGRID" id="133444">
    <property type="interactions" value="5"/>
</dbReference>
<dbReference type="FunCoup" id="A6NIK2">
    <property type="interactions" value="3"/>
</dbReference>
<dbReference type="STRING" id="9606.ENSP00000367315"/>
<dbReference type="iPTMnet" id="A6NIK2"/>
<dbReference type="PhosphoSitePlus" id="A6NIK2"/>
<dbReference type="BioMuta" id="LRRC10B"/>
<dbReference type="jPOST" id="A6NIK2"/>
<dbReference type="MassIVE" id="A6NIK2"/>
<dbReference type="PaxDb" id="9606-ENSP00000367315"/>
<dbReference type="PeptideAtlas" id="A6NIK2"/>
<dbReference type="Antibodypedia" id="67383">
    <property type="antibodies" value="14 antibodies from 7 providers"/>
</dbReference>
<dbReference type="DNASU" id="390205"/>
<dbReference type="Ensembl" id="ENST00000378075.4">
    <property type="protein sequence ID" value="ENSP00000367315.2"/>
    <property type="gene ID" value="ENSG00000204950.4"/>
</dbReference>
<dbReference type="GeneID" id="390205"/>
<dbReference type="KEGG" id="hsa:390205"/>
<dbReference type="MANE-Select" id="ENST00000378075.4">
    <property type="protein sequence ID" value="ENSP00000367315.2"/>
    <property type="RefSeq nucleotide sequence ID" value="NM_001145077.2"/>
    <property type="RefSeq protein sequence ID" value="NP_001138549.1"/>
</dbReference>
<dbReference type="UCSC" id="uc010rlk.2">
    <property type="organism name" value="human"/>
</dbReference>
<dbReference type="AGR" id="HGNC:37215"/>
<dbReference type="CTD" id="390205"/>
<dbReference type="DisGeNET" id="390205"/>
<dbReference type="GeneCards" id="LRRC10B"/>
<dbReference type="HGNC" id="HGNC:37215">
    <property type="gene designation" value="LRRC10B"/>
</dbReference>
<dbReference type="HPA" id="ENSG00000204950">
    <property type="expression patterns" value="Group enriched (brain, fallopian tube, pituitary gland)"/>
</dbReference>
<dbReference type="neXtProt" id="NX_A6NIK2"/>
<dbReference type="OpenTargets" id="ENSG00000204950"/>
<dbReference type="PharmGKB" id="PA165543456"/>
<dbReference type="VEuPathDB" id="HostDB:ENSG00000204950"/>
<dbReference type="eggNOG" id="KOG0619">
    <property type="taxonomic scope" value="Eukaryota"/>
</dbReference>
<dbReference type="GeneTree" id="ENSGT00940000155040"/>
<dbReference type="HOGENOM" id="CLU_000288_18_15_1"/>
<dbReference type="InParanoid" id="A6NIK2"/>
<dbReference type="OMA" id="DHNPVKG"/>
<dbReference type="OrthoDB" id="676979at2759"/>
<dbReference type="PAN-GO" id="A6NIK2">
    <property type="GO annotations" value="0 GO annotations based on evolutionary models"/>
</dbReference>
<dbReference type="PhylomeDB" id="A6NIK2"/>
<dbReference type="TreeFam" id="TF332853"/>
<dbReference type="PathwayCommons" id="A6NIK2"/>
<dbReference type="SignaLink" id="A6NIK2"/>
<dbReference type="BioGRID-ORCS" id="390205">
    <property type="hits" value="18 hits in 1137 CRISPR screens"/>
</dbReference>
<dbReference type="GenomeRNAi" id="390205"/>
<dbReference type="Pharos" id="A6NIK2">
    <property type="development level" value="Tdark"/>
</dbReference>
<dbReference type="PRO" id="PR:A6NIK2"/>
<dbReference type="Proteomes" id="UP000005640">
    <property type="component" value="Chromosome 11"/>
</dbReference>
<dbReference type="RNAct" id="A6NIK2">
    <property type="molecule type" value="protein"/>
</dbReference>
<dbReference type="Bgee" id="ENSG00000204950">
    <property type="expression patterns" value="Expressed in bronchial epithelial cell and 136 other cell types or tissues"/>
</dbReference>
<dbReference type="Gene3D" id="3.80.10.10">
    <property type="entry name" value="Ribonuclease Inhibitor"/>
    <property type="match status" value="2"/>
</dbReference>
<dbReference type="InterPro" id="IPR001611">
    <property type="entry name" value="Leu-rich_rpt"/>
</dbReference>
<dbReference type="InterPro" id="IPR003591">
    <property type="entry name" value="Leu-rich_rpt_typical-subtyp"/>
</dbReference>
<dbReference type="InterPro" id="IPR032675">
    <property type="entry name" value="LRR_dom_sf"/>
</dbReference>
<dbReference type="InterPro" id="IPR050216">
    <property type="entry name" value="LRR_domain-containing"/>
</dbReference>
<dbReference type="PANTHER" id="PTHR48051">
    <property type="match status" value="1"/>
</dbReference>
<dbReference type="PANTHER" id="PTHR48051:SF51">
    <property type="entry name" value="LEUCINE-RICH REPEAT-CONTAINING PROTEIN 10B"/>
    <property type="match status" value="1"/>
</dbReference>
<dbReference type="Pfam" id="PF13855">
    <property type="entry name" value="LRR_8"/>
    <property type="match status" value="1"/>
</dbReference>
<dbReference type="SMART" id="SM00364">
    <property type="entry name" value="LRR_BAC"/>
    <property type="match status" value="6"/>
</dbReference>
<dbReference type="SMART" id="SM00369">
    <property type="entry name" value="LRR_TYP"/>
    <property type="match status" value="5"/>
</dbReference>
<dbReference type="SUPFAM" id="SSF52058">
    <property type="entry name" value="L domain-like"/>
    <property type="match status" value="1"/>
</dbReference>
<dbReference type="PROSITE" id="PS51450">
    <property type="entry name" value="LRR"/>
    <property type="match status" value="7"/>
</dbReference>
<gene>
    <name type="primary">LRRC10B</name>
</gene>
<accession>A6NIK2</accession>
<protein>
    <recommendedName>
        <fullName>Leucine-rich repeat-containing protein 10B</fullName>
    </recommendedName>
</protein>
<evidence type="ECO:0000256" key="1">
    <source>
        <dbReference type="SAM" id="MobiDB-lite"/>
    </source>
</evidence>